<reference key="1">
    <citation type="journal article" date="1998" name="DNA Res.">
        <title>Structural analysis of Arabidopsis thaliana chromosome 5. V. Sequence features of the regions of 1,381,565 bp covered by twenty one physically assigned P1 and TAC clones.</title>
        <authorList>
            <person name="Kaneko T."/>
            <person name="Kotani H."/>
            <person name="Nakamura Y."/>
            <person name="Sato S."/>
            <person name="Asamizu E."/>
            <person name="Miyajima N."/>
            <person name="Tabata S."/>
        </authorList>
    </citation>
    <scope>NUCLEOTIDE SEQUENCE [LARGE SCALE GENOMIC DNA]</scope>
    <source>
        <strain>cv. Columbia</strain>
    </source>
</reference>
<reference key="2">
    <citation type="journal article" date="2017" name="Plant J.">
        <title>Araport11: a complete reannotation of the Arabidopsis thaliana reference genome.</title>
        <authorList>
            <person name="Cheng C.Y."/>
            <person name="Krishnakumar V."/>
            <person name="Chan A.P."/>
            <person name="Thibaud-Nissen F."/>
            <person name="Schobel S."/>
            <person name="Town C.D."/>
        </authorList>
    </citation>
    <scope>GENOME REANNOTATION</scope>
    <source>
        <strain>cv. Columbia</strain>
    </source>
</reference>
<reference key="3">
    <citation type="journal article" date="2011" name="Biosci. Biotechnol. Biochem.">
        <title>Double-knockout of putative endo-beta-N-acetylglucosaminidase (ENGase) genes in Arabidopsis thaliana: loss of ENGase activity induced accumulation of high-mannose type free N-glycans bearing N,N'-acetylchitobiosyl unit.</title>
        <authorList>
            <person name="Kimura Y."/>
            <person name="Takeoka Y."/>
            <person name="Inoue M."/>
            <person name="Maeda M."/>
            <person name="Fujiyama K."/>
        </authorList>
    </citation>
    <scope>FUNCTION</scope>
    <scope>CATALYTIC ACTIVITY</scope>
    <scope>DISRUPTION PHENOTYPE</scope>
</reference>
<reference key="4">
    <citation type="journal article" date="2011" name="Plant Mol. Biol.">
        <title>The two endo-beta-N-acetylglucosaminidase genes from Arabidopsis thaliana encode cytoplasmic enzymes controlling free N-glycan levels.</title>
        <authorList>
            <person name="Fischl R.M."/>
            <person name="Stadlmann J."/>
            <person name="Grass J."/>
            <person name="Altmann F."/>
            <person name="Leonard R."/>
        </authorList>
    </citation>
    <scope>FUNCTION</scope>
    <scope>CATALYTIC ACTIVITY</scope>
    <scope>BIOPHYSICOCHEMICAL PROPERTIES</scope>
    <scope>SUBCELLULAR LOCATION</scope>
    <scope>DISRUPTION PHENOTYPE</scope>
</reference>
<comment type="function">
    <text evidence="2 3">Endoglycosidase that releases N-glycans from glycoproteins by cleaving the beta-1,4-glycosidic bond in the N,N'-diacetylchitobiose core. Involved in the production of high-mannose type N-glycans during plant development and fruit maturation.</text>
</comment>
<comment type="catalytic activity">
    <reaction evidence="2 3">
        <text>an N(4)-(oligosaccharide-(1-&gt;3)-[oligosaccharide-(1-&gt;6)]-beta-D-Man-(1-&gt;4)-beta-D-GlcNAc-(1-&gt;4)-alpha-D-GlcNAc)-L-asparaginyl-[protein] + H2O = an oligosaccharide-(1-&gt;3)-[oligosaccharide-(1-&gt;6)]-beta-D-Man-(1-&gt;4)-D-GlcNAc + N(4)-(N-acetyl-beta-D-glucosaminyl)-L-asparaginyl-[protein]</text>
        <dbReference type="Rhea" id="RHEA:73067"/>
        <dbReference type="Rhea" id="RHEA-COMP:12603"/>
        <dbReference type="Rhea" id="RHEA-COMP:18176"/>
        <dbReference type="ChEBI" id="CHEBI:15377"/>
        <dbReference type="ChEBI" id="CHEBI:132248"/>
        <dbReference type="ChEBI" id="CHEBI:192714"/>
        <dbReference type="ChEBI" id="CHEBI:192715"/>
        <dbReference type="EC" id="3.2.1.96"/>
    </reaction>
</comment>
<comment type="biophysicochemical properties">
    <kinetics>
        <KM evidence="3">0.5 mM for dabsyl-Asn-Man5</KM>
    </kinetics>
    <phDependence>
        <text evidence="3">Optimum pH is 6.0-7.0.</text>
    </phDependence>
</comment>
<comment type="subcellular location">
    <subcellularLocation>
        <location evidence="3">Cytoplasm</location>
        <location evidence="3">Cytosol</location>
    </subcellularLocation>
</comment>
<comment type="disruption phenotype">
    <text evidence="2 3">No visible phenotype under normal growth conditions, but the double mutants engase85A and engase85B accumulate very high level of free N-glycans carrying two GlcNAc at the reducing end, but their counterparts with a single GlcNAc are completely absent.</text>
</comment>
<comment type="similarity">
    <text evidence="5">Belongs to the glycosyl hydrolase 85 family.</text>
</comment>
<comment type="sequence caution" evidence="5">
    <conflict type="erroneous gene model prediction">
        <sequence resource="EMBL-CDS" id="BAB09989"/>
    </conflict>
</comment>
<name>ENAS1_ARATH</name>
<evidence type="ECO:0000256" key="1">
    <source>
        <dbReference type="SAM" id="MobiDB-lite"/>
    </source>
</evidence>
<evidence type="ECO:0000269" key="2">
    <source>
    </source>
</evidence>
<evidence type="ECO:0000269" key="3">
    <source>
    </source>
</evidence>
<evidence type="ECO:0000303" key="4">
    <source>
    </source>
</evidence>
<evidence type="ECO:0000305" key="5"/>
<evidence type="ECO:0000312" key="6">
    <source>
        <dbReference type="Araport" id="AT5G05460"/>
    </source>
</evidence>
<evidence type="ECO:0000312" key="7">
    <source>
        <dbReference type="EMBL" id="BAB09989.1"/>
    </source>
</evidence>
<dbReference type="EC" id="3.2.1.96" evidence="2 3"/>
<dbReference type="EMBL" id="AB010692">
    <property type="protein sequence ID" value="BAB09989.1"/>
    <property type="status" value="ALT_SEQ"/>
    <property type="molecule type" value="Genomic_DNA"/>
</dbReference>
<dbReference type="EMBL" id="CP002688">
    <property type="protein sequence ID" value="AED90876.1"/>
    <property type="molecule type" value="Genomic_DNA"/>
</dbReference>
<dbReference type="RefSeq" id="NP_196165.3">
    <property type="nucleotide sequence ID" value="NM_120628.5"/>
</dbReference>
<dbReference type="SMR" id="F4JZC2"/>
<dbReference type="FunCoup" id="F4JZC2">
    <property type="interactions" value="1206"/>
</dbReference>
<dbReference type="STRING" id="3702.F4JZC2"/>
<dbReference type="CAZy" id="GH85">
    <property type="family name" value="Glycoside Hydrolase Family 85"/>
</dbReference>
<dbReference type="PaxDb" id="3702-AT5G05460.1"/>
<dbReference type="ProteomicsDB" id="220369"/>
<dbReference type="EnsemblPlants" id="AT5G05460.1">
    <property type="protein sequence ID" value="AT5G05460.1"/>
    <property type="gene ID" value="AT5G05460"/>
</dbReference>
<dbReference type="GeneID" id="830429"/>
<dbReference type="Gramene" id="AT5G05460.1">
    <property type="protein sequence ID" value="AT5G05460.1"/>
    <property type="gene ID" value="AT5G05460"/>
</dbReference>
<dbReference type="KEGG" id="ath:AT5G05460"/>
<dbReference type="Araport" id="AT5G05460"/>
<dbReference type="TAIR" id="AT5G05460">
    <property type="gene designation" value="ENGASE85A"/>
</dbReference>
<dbReference type="eggNOG" id="KOG2331">
    <property type="taxonomic scope" value="Eukaryota"/>
</dbReference>
<dbReference type="HOGENOM" id="CLU_015297_1_0_1"/>
<dbReference type="InParanoid" id="F4JZC2"/>
<dbReference type="OMA" id="WGVLQSY"/>
<dbReference type="OrthoDB" id="284473at2759"/>
<dbReference type="PRO" id="PR:F4JZC2"/>
<dbReference type="Proteomes" id="UP000006548">
    <property type="component" value="Chromosome 5"/>
</dbReference>
<dbReference type="ExpressionAtlas" id="F4JZC2">
    <property type="expression patterns" value="baseline and differential"/>
</dbReference>
<dbReference type="GO" id="GO:0005737">
    <property type="term" value="C:cytoplasm"/>
    <property type="evidence" value="ECO:0000314"/>
    <property type="project" value="TAIR"/>
</dbReference>
<dbReference type="GO" id="GO:0005829">
    <property type="term" value="C:cytosol"/>
    <property type="evidence" value="ECO:0007669"/>
    <property type="project" value="UniProtKB-SubCell"/>
</dbReference>
<dbReference type="GO" id="GO:0005773">
    <property type="term" value="C:vacuole"/>
    <property type="evidence" value="ECO:0007005"/>
    <property type="project" value="TAIR"/>
</dbReference>
<dbReference type="GO" id="GO:0033925">
    <property type="term" value="F:mannosyl-glycoprotein endo-beta-N-acetylglucosaminidase activity"/>
    <property type="evidence" value="ECO:0000314"/>
    <property type="project" value="TAIR"/>
</dbReference>
<dbReference type="GO" id="GO:0006491">
    <property type="term" value="P:N-glycan processing"/>
    <property type="evidence" value="ECO:0000314"/>
    <property type="project" value="TAIR"/>
</dbReference>
<dbReference type="GO" id="GO:0006517">
    <property type="term" value="P:protein deglycosylation"/>
    <property type="evidence" value="ECO:0000316"/>
    <property type="project" value="TAIR"/>
</dbReference>
<dbReference type="CDD" id="cd06547">
    <property type="entry name" value="GH85_ENGase"/>
    <property type="match status" value="1"/>
</dbReference>
<dbReference type="FunFam" id="3.20.20.80:FF:000043">
    <property type="entry name" value="cytosolic endo-beta-N-acetylglucosaminidase"/>
    <property type="match status" value="1"/>
</dbReference>
<dbReference type="Gene3D" id="2.60.120.260">
    <property type="entry name" value="Galactose-binding domain-like"/>
    <property type="match status" value="1"/>
</dbReference>
<dbReference type="Gene3D" id="3.20.20.80">
    <property type="entry name" value="Glycosidases"/>
    <property type="match status" value="1"/>
</dbReference>
<dbReference type="InterPro" id="IPR032979">
    <property type="entry name" value="ENGase"/>
</dbReference>
<dbReference type="InterPro" id="IPR005201">
    <property type="entry name" value="Glyco_hydro_85"/>
</dbReference>
<dbReference type="PANTHER" id="PTHR13246:SF1">
    <property type="entry name" value="CYTOSOLIC ENDO-BETA-N-ACETYLGLUCOSAMINIDASE"/>
    <property type="match status" value="1"/>
</dbReference>
<dbReference type="PANTHER" id="PTHR13246">
    <property type="entry name" value="ENDO BETA N-ACETYLGLUCOSAMINIDASE"/>
    <property type="match status" value="1"/>
</dbReference>
<dbReference type="Pfam" id="PF03644">
    <property type="entry name" value="Glyco_hydro_85"/>
    <property type="match status" value="1"/>
</dbReference>
<feature type="chain" id="PRO_0000432756" description="Cytosolic endo-beta-N-acetylglucosaminidase 1">
    <location>
        <begin position="1"/>
        <end position="680"/>
    </location>
</feature>
<feature type="region of interest" description="Disordered" evidence="1">
    <location>
        <begin position="1"/>
        <end position="21"/>
    </location>
</feature>
<feature type="compositionally biased region" description="Pro residues" evidence="1">
    <location>
        <begin position="1"/>
        <end position="15"/>
    </location>
</feature>
<accession>F4JZC2</accession>
<accession>Q9FLA9</accession>
<protein>
    <recommendedName>
        <fullName evidence="5">Cytosolic endo-beta-N-acetylglucosaminidase 1</fullName>
        <shortName evidence="5">ENGase 1</shortName>
        <ecNumber evidence="2 3">3.2.1.96</ecNumber>
    </recommendedName>
    <alternativeName>
        <fullName evidence="4">Endo-beta-N-acetyglucosaminidase 85A</fullName>
        <shortName evidence="4">AtENGase85A</shortName>
    </alternativeName>
</protein>
<organism>
    <name type="scientific">Arabidopsis thaliana</name>
    <name type="common">Mouse-ear cress</name>
    <dbReference type="NCBI Taxonomy" id="3702"/>
    <lineage>
        <taxon>Eukaryota</taxon>
        <taxon>Viridiplantae</taxon>
        <taxon>Streptophyta</taxon>
        <taxon>Embryophyta</taxon>
        <taxon>Tracheophyta</taxon>
        <taxon>Spermatophyta</taxon>
        <taxon>Magnoliopsida</taxon>
        <taxon>eudicotyledons</taxon>
        <taxon>Gunneridae</taxon>
        <taxon>Pentapetalae</taxon>
        <taxon>rosids</taxon>
        <taxon>malvids</taxon>
        <taxon>Brassicales</taxon>
        <taxon>Brassicaceae</taxon>
        <taxon>Camelineae</taxon>
        <taxon>Arabidopsis</taxon>
    </lineage>
</organism>
<proteinExistence type="evidence at protein level"/>
<sequence length="680" mass="76351">MSVAPPAPSPPPFDPTKPSTPISFPIKTLQDLKSRSYFDSFHYPFNRSSVPLRRNIGALSDRPRLLVCHDMKGGYVDDKWVQGCGNNAGYAIWDWYLMDVFVYFSHSLVTLPPPCWTNTAHRHGVKVLGTFITEWDEGKATCKELLATKESAQMYAERLAELAAALGFDGWLINIENVIDEVQIPNLMVFVSHLTKVMHSSVPGGLVIWYDSVTIDGHLAWQDQLTENNKPFFDICDGIFMNYTWKENYPKASAEIAGDRKYDVYMGIDVFGRGTYGGGQWTANVALDLLKSSNVSAAIFAPGWVYETEQPPDFYTAQNKWWSLVEKSWGIVQTYPQVLPFYSDFNQGLGSHTSLGGRKLSEAPWYNISCQSLQPFLEFNEGRNSETIQVTVDGREASYNGGGNVSFRGKLKRNAHFTARLFKPQLQLSAAPISIFFSVKSDKRSELSILLHFSSPSQEKKSMLMVPNESINRFGDMFLPCLLTSKQTTSGWTVHETNLVLDGHTLTEISAFCSRPDDLTEETNTLEYFALLGHISIKSQQKAKVYPLASSWVIEAHHVKFVPGDSGSKTLSCKLEWRLKHPEEDSVFPKYNVYAENLSSSEYRPRKVMEEPRSEKVFLGTAHVDAYYVSEMVVGSDVKGVRFVVQTCGEDGSWQELDASPNLVVEVERVSSKLCCCGLI</sequence>
<keyword id="KW-0963">Cytoplasm</keyword>
<keyword id="KW-0326">Glycosidase</keyword>
<keyword id="KW-0378">Hydrolase</keyword>
<keyword id="KW-1185">Reference proteome</keyword>
<gene>
    <name evidence="5" type="primary">ENGASE1</name>
    <name evidence="4" type="synonym">ENGASE85A</name>
    <name evidence="6" type="ordered locus">At5g05460</name>
    <name evidence="7" type="ORF">K18I23.27</name>
</gene>